<keyword id="KW-0002">3D-structure</keyword>
<keyword id="KW-0025">Alternative splicing</keyword>
<keyword id="KW-1003">Cell membrane</keyword>
<keyword id="KW-0868">Chloride</keyword>
<keyword id="KW-1015">Disulfide bond</keyword>
<keyword id="KW-0325">Glycoprotein</keyword>
<keyword id="KW-0406">Ion transport</keyword>
<keyword id="KW-0472">Membrane</keyword>
<keyword id="KW-0479">Metal-binding</keyword>
<keyword id="KW-0597">Phosphoprotein</keyword>
<keyword id="KW-0630">Potassium</keyword>
<keyword id="KW-0633">Potassium transport</keyword>
<keyword id="KW-1185">Reference proteome</keyword>
<keyword id="KW-0915">Sodium</keyword>
<keyword id="KW-0739">Sodium transport</keyword>
<keyword id="KW-0769">Symport</keyword>
<keyword id="KW-0812">Transmembrane</keyword>
<keyword id="KW-1133">Transmembrane helix</keyword>
<keyword id="KW-0813">Transport</keyword>
<name>S12A2_DANRE</name>
<protein>
    <recommendedName>
        <fullName evidence="13">Solute carrier family 12 member 2</fullName>
    </recommendedName>
    <alternativeName>
        <fullName>Bumetanide-sensitive sodium-(potassium)-chloride cotransporter 2</fullName>
        <shortName>BSC2</shortName>
    </alternativeName>
    <alternativeName>
        <fullName evidence="7">Na-K-Cl cotransporter 1</fullName>
        <shortName evidence="7">NKCC1</shortName>
    </alternativeName>
</protein>
<accession>A0A0G2KTI4</accession>
<accession>A0A0G2KGS0</accession>
<accession>C7EA90</accession>
<accession>Q6IQW8</accession>
<dbReference type="EMBL" id="GQ259737">
    <property type="protein sequence ID" value="ACT52814.1"/>
    <property type="molecule type" value="mRNA"/>
</dbReference>
<dbReference type="EMBL" id="CABZ01010036">
    <property type="status" value="NOT_ANNOTATED_CDS"/>
    <property type="molecule type" value="Genomic_DNA"/>
</dbReference>
<dbReference type="EMBL" id="CABZ01081744">
    <property type="status" value="NOT_ANNOTATED_CDS"/>
    <property type="molecule type" value="Genomic_DNA"/>
</dbReference>
<dbReference type="EMBL" id="CABZ01081745">
    <property type="status" value="NOT_ANNOTATED_CDS"/>
    <property type="molecule type" value="Genomic_DNA"/>
</dbReference>
<dbReference type="EMBL" id="CABZ01081746">
    <property type="status" value="NOT_ANNOTATED_CDS"/>
    <property type="molecule type" value="Genomic_DNA"/>
</dbReference>
<dbReference type="EMBL" id="CR628409">
    <property type="status" value="NOT_ANNOTATED_CDS"/>
    <property type="molecule type" value="Genomic_DNA"/>
</dbReference>
<dbReference type="EMBL" id="CU459120">
    <property type="status" value="NOT_ANNOTATED_CDS"/>
    <property type="molecule type" value="Genomic_DNA"/>
</dbReference>
<dbReference type="EMBL" id="CU633864">
    <property type="status" value="NOT_ANNOTATED_CDS"/>
    <property type="molecule type" value="Genomic_DNA"/>
</dbReference>
<dbReference type="EMBL" id="BC071283">
    <property type="protein sequence ID" value="AAH71283.1"/>
    <property type="molecule type" value="mRNA"/>
</dbReference>
<dbReference type="RefSeq" id="NP_001002080.1">
    <property type="nucleotide sequence ID" value="NM_001002080.1"/>
</dbReference>
<dbReference type="RefSeq" id="NP_001157126.1">
    <property type="nucleotide sequence ID" value="NM_001163654.1"/>
</dbReference>
<dbReference type="PDB" id="6NPH">
    <property type="method" value="EM"/>
    <property type="resolution" value="2.90 A"/>
    <property type="chains" value="A/B=206-677"/>
</dbReference>
<dbReference type="PDB" id="6NPJ">
    <property type="method" value="EM"/>
    <property type="resolution" value="3.80 A"/>
    <property type="chains" value="B/C=683-1120"/>
</dbReference>
<dbReference type="PDB" id="6NPK">
    <property type="method" value="EM"/>
    <property type="resolution" value="3.60 A"/>
    <property type="chains" value="A/B=206-677"/>
</dbReference>
<dbReference type="PDB" id="6NPL">
    <property type="method" value="EM"/>
    <property type="resolution" value="2.90 A"/>
    <property type="chains" value="A/B=206-1120"/>
</dbReference>
<dbReference type="PDBsum" id="6NPH"/>
<dbReference type="PDBsum" id="6NPJ"/>
<dbReference type="PDBsum" id="6NPK"/>
<dbReference type="PDBsum" id="6NPL"/>
<dbReference type="EMDB" id="EMD-0470"/>
<dbReference type="EMDB" id="EMD-0471"/>
<dbReference type="EMDB" id="EMD-0472"/>
<dbReference type="EMDB" id="EMD-0473"/>
<dbReference type="SMR" id="A0A0G2KTI4"/>
<dbReference type="FunCoup" id="A0A0G2KTI4">
    <property type="interactions" value="753"/>
</dbReference>
<dbReference type="STRING" id="7955.ENSDARP00000135730"/>
<dbReference type="TCDB" id="2.A.30.1.8">
    <property type="family name" value="the cation-chloride cotransporter (ccc) family"/>
</dbReference>
<dbReference type="GlyCosmos" id="A0A0G2KTI4">
    <property type="glycosylation" value="2 sites, No reported glycans"/>
</dbReference>
<dbReference type="PaxDb" id="7955-ENSDARP00000004706"/>
<dbReference type="Ensembl" id="ENSDART00000169885">
    <molecule id="A0A0G2KTI4-1"/>
    <property type="protein sequence ID" value="ENSDARP00000135730"/>
    <property type="gene ID" value="ENSDARG00000104573"/>
</dbReference>
<dbReference type="GeneID" id="415170"/>
<dbReference type="KEGG" id="dre:415170"/>
<dbReference type="AGR" id="ZFIN:ZDB-GENE-040625-53"/>
<dbReference type="CTD" id="6558"/>
<dbReference type="ZFIN" id="ZDB-GENE-040625-53">
    <property type="gene designation" value="slc12a2"/>
</dbReference>
<dbReference type="eggNOG" id="KOG2083">
    <property type="taxonomic scope" value="Eukaryota"/>
</dbReference>
<dbReference type="InParanoid" id="A0A0G2KTI4"/>
<dbReference type="OMA" id="CTHITKK"/>
<dbReference type="OrthoDB" id="2020542at2759"/>
<dbReference type="Reactome" id="R-DRE-426117">
    <property type="pathway name" value="Cation-coupled Chloride cotransporters"/>
</dbReference>
<dbReference type="PRO" id="PR:A0A0G2KTI4"/>
<dbReference type="Proteomes" id="UP000000437">
    <property type="component" value="Chromosome 10"/>
</dbReference>
<dbReference type="Bgee" id="ENSDARG00000104573">
    <property type="expression patterns" value="Expressed in mature ovarian follicle and 38 other cell types or tissues"/>
</dbReference>
<dbReference type="ExpressionAtlas" id="A0A0G2KTI4">
    <property type="expression patterns" value="baseline and differential"/>
</dbReference>
<dbReference type="GO" id="GO:0016324">
    <property type="term" value="C:apical plasma membrane"/>
    <property type="evidence" value="ECO:0000318"/>
    <property type="project" value="GO_Central"/>
</dbReference>
<dbReference type="GO" id="GO:0016323">
    <property type="term" value="C:basolateral plasma membrane"/>
    <property type="evidence" value="ECO:0000314"/>
    <property type="project" value="ZFIN"/>
</dbReference>
<dbReference type="GO" id="GO:0008519">
    <property type="term" value="F:ammonium channel activity"/>
    <property type="evidence" value="ECO:0000318"/>
    <property type="project" value="GO_Central"/>
</dbReference>
<dbReference type="GO" id="GO:0015377">
    <property type="term" value="F:chloride:monoatomic cation symporter activity"/>
    <property type="evidence" value="ECO:0000314"/>
    <property type="project" value="ZFIN"/>
</dbReference>
<dbReference type="GO" id="GO:0042802">
    <property type="term" value="F:identical protein binding"/>
    <property type="evidence" value="ECO:0000353"/>
    <property type="project" value="IntAct"/>
</dbReference>
<dbReference type="GO" id="GO:0046872">
    <property type="term" value="F:metal ion binding"/>
    <property type="evidence" value="ECO:0007669"/>
    <property type="project" value="UniProtKB-KW"/>
</dbReference>
<dbReference type="GO" id="GO:0008511">
    <property type="term" value="F:sodium:potassium:chloride symporter activity"/>
    <property type="evidence" value="ECO:0000318"/>
    <property type="project" value="GO_Central"/>
</dbReference>
<dbReference type="GO" id="GO:0072488">
    <property type="term" value="P:ammonium transmembrane transport"/>
    <property type="evidence" value="ECO:0000318"/>
    <property type="project" value="GO_Central"/>
</dbReference>
<dbReference type="GO" id="GO:0006884">
    <property type="term" value="P:cell volume homeostasis"/>
    <property type="evidence" value="ECO:0000318"/>
    <property type="project" value="GO_Central"/>
</dbReference>
<dbReference type="GO" id="GO:0055064">
    <property type="term" value="P:chloride ion homeostasis"/>
    <property type="evidence" value="ECO:0000318"/>
    <property type="project" value="GO_Central"/>
</dbReference>
<dbReference type="GO" id="GO:1902476">
    <property type="term" value="P:chloride transmembrane transport"/>
    <property type="evidence" value="ECO:0000318"/>
    <property type="project" value="GO_Central"/>
</dbReference>
<dbReference type="GO" id="GO:0043583">
    <property type="term" value="P:ear development"/>
    <property type="evidence" value="ECO:0000315"/>
    <property type="project" value="ZFIN"/>
</dbReference>
<dbReference type="GO" id="GO:0042472">
    <property type="term" value="P:inner ear morphogenesis"/>
    <property type="evidence" value="ECO:0000315"/>
    <property type="project" value="ZFIN"/>
</dbReference>
<dbReference type="GO" id="GO:0055075">
    <property type="term" value="P:potassium ion homeostasis"/>
    <property type="evidence" value="ECO:0000318"/>
    <property type="project" value="GO_Central"/>
</dbReference>
<dbReference type="GO" id="GO:1990573">
    <property type="term" value="P:potassium ion import across plasma membrane"/>
    <property type="evidence" value="ECO:0000318"/>
    <property type="project" value="GO_Central"/>
</dbReference>
<dbReference type="GO" id="GO:0055078">
    <property type="term" value="P:sodium ion homeostasis"/>
    <property type="evidence" value="ECO:0000318"/>
    <property type="project" value="GO_Central"/>
</dbReference>
<dbReference type="GO" id="GO:0035725">
    <property type="term" value="P:sodium ion transmembrane transport"/>
    <property type="evidence" value="ECO:0000318"/>
    <property type="project" value="GO_Central"/>
</dbReference>
<dbReference type="GO" id="GO:0048798">
    <property type="term" value="P:swim bladder inflation"/>
    <property type="evidence" value="ECO:0000315"/>
    <property type="project" value="ZFIN"/>
</dbReference>
<dbReference type="FunFam" id="1.20.1740.10:FF:000005">
    <property type="entry name" value="Solute carrier family 12 member 1"/>
    <property type="match status" value="1"/>
</dbReference>
<dbReference type="Gene3D" id="1.20.1740.10">
    <property type="entry name" value="Amino acid/polyamine transporter I"/>
    <property type="match status" value="1"/>
</dbReference>
<dbReference type="InterPro" id="IPR004841">
    <property type="entry name" value="AA-permease/SLC12A_dom"/>
</dbReference>
<dbReference type="InterPro" id="IPR013612">
    <property type="entry name" value="AA_permease_N"/>
</dbReference>
<dbReference type="InterPro" id="IPR002444">
    <property type="entry name" value="NKCC1"/>
</dbReference>
<dbReference type="InterPro" id="IPR018491">
    <property type="entry name" value="SLC12_C"/>
</dbReference>
<dbReference type="InterPro" id="IPR002443">
    <property type="entry name" value="SLC12A1/SLC12A2"/>
</dbReference>
<dbReference type="InterPro" id="IPR004842">
    <property type="entry name" value="SLC12A_fam"/>
</dbReference>
<dbReference type="NCBIfam" id="TIGR00930">
    <property type="entry name" value="2a30"/>
    <property type="match status" value="1"/>
</dbReference>
<dbReference type="PANTHER" id="PTHR11827:SF58">
    <property type="entry name" value="SOLUTE CARRIER FAMILY 12 MEMBER 2"/>
    <property type="match status" value="1"/>
</dbReference>
<dbReference type="PANTHER" id="PTHR11827">
    <property type="entry name" value="SOLUTE CARRIER FAMILY 12, CATION COTRANSPORTERS"/>
    <property type="match status" value="1"/>
</dbReference>
<dbReference type="Pfam" id="PF00324">
    <property type="entry name" value="AA_permease"/>
    <property type="match status" value="1"/>
</dbReference>
<dbReference type="Pfam" id="PF08403">
    <property type="entry name" value="AA_permease_N"/>
    <property type="match status" value="1"/>
</dbReference>
<dbReference type="Pfam" id="PF03522">
    <property type="entry name" value="SLC12"/>
    <property type="match status" value="1"/>
</dbReference>
<dbReference type="PRINTS" id="PR01207">
    <property type="entry name" value="NAKCLTRNSPRT"/>
</dbReference>
<dbReference type="PRINTS" id="PR01208">
    <property type="entry name" value="NAKCLTRSPRT1"/>
</dbReference>
<sequence>MSASPPISAGDYLSAPEPDALKPAGPTPSQSRFQVDLVTESAGDGETTVGFDSSPPEYVAEPPPDGLRDSVSGGEEAKGRFRVVNFAASSPDAAPAETAQNGDTVMSEGSLHSSTGGQQHHHYDTHTNTYYLRTFGHNTIDAVPKIDFYRQTAAPLGEKLIRPTLSELHDELDKEPFEDGFANGEELTPAEESAAKDVSESKGVVKFGWIKGVLVRCMLNIWGVMLFIRMTWIVGQAGIAYSCIIVIMATVVTTITGCSTSAIATNGFVRGGGAYYLISRSLGPEFGGSIGLIFAFANAVAVAMYVVGFAETVVELLMDSGLLMIDQTNDIRVIGTITVILLLGISVAGMEWEAKAQIFLLVILITAIFNYFIGSFIAVDSKKKFGFFSYDAGILAENFGPDFRGQTFFSVFSIFFPAATGILAGANISGDLADPQMAIPKGTLLAILITGLVYVGVAISAGACIVRDATGIESNFTLISNCTDAACKYGYDFSSCRPTVEGEVSSCKFGLHNDFQVMSVVSGFSPLISAGIFSATLSSALASLVSAPKVFQALCKDNIYPGIAIFGKGYGKNNEPLRGYFLTFGIALAFILIAELNVIAPIISNFFLASYALINFSVFHASLANSPGWRPSFKYYNMWASLAGAILCCVVMFIINWWAALLTNVIVLSLYIYVSYKKPDVNWGSSTQALTYHQALTHSLQLCGVADHIKTFRPQCLVMTGAPNSRPAILHLVHAFTKNVGLMLCGHVRISSRRPNFKELNSDMLRYQRWLLNNNSKAFYTCVVAEDLRQGTQYMLQAAGLGRLRPNTLVIGFKNDWRTGDIKEVETYINLIHDAFDFQYGVVILRLREGLDISHIQGQDDSSGMKDVVVSVDISKDSDGDSSKPSSKATSVQNSPAVQKDEDDDGKAHTQPLLKKDKKSPTVPLNVADQRLLDASQQFQQKQGKGTVDVWWLFDDGGLTLLIPYLIANKKKWKDCKIRVFIGGKINRIDHDRRAMATLLSKFRIDFSDITVLGDINTKPKSEGLTEFAEMIEPYKLREDDMEQEAAEKLKSEEPWRITDNELELYKAKGNRQIRLNELLKEHSSTANLIVMSMPLARKGAVSSALYMAWLDTLSKDLPPILLVRGNHQSVLTFYS</sequence>
<proteinExistence type="evidence at protein level"/>
<evidence type="ECO:0000250" key="1">
    <source>
        <dbReference type="UniProtKB" id="P55011"/>
    </source>
</evidence>
<evidence type="ECO:0000250" key="2">
    <source>
        <dbReference type="UniProtKB" id="P55013"/>
    </source>
</evidence>
<evidence type="ECO:0000255" key="3">
    <source>
        <dbReference type="PROSITE-ProRule" id="PRU00498"/>
    </source>
</evidence>
<evidence type="ECO:0000256" key="4">
    <source>
        <dbReference type="SAM" id="MobiDB-lite"/>
    </source>
</evidence>
<evidence type="ECO:0000269" key="5">
    <source>
    </source>
</evidence>
<evidence type="ECO:0000269" key="6">
    <source>
    </source>
</evidence>
<evidence type="ECO:0000303" key="7">
    <source>
    </source>
</evidence>
<evidence type="ECO:0000305" key="8"/>
<evidence type="ECO:0000305" key="9">
    <source>
    </source>
</evidence>
<evidence type="ECO:0000312" key="10">
    <source>
        <dbReference type="EMBL" id="AAH71283.1"/>
    </source>
</evidence>
<evidence type="ECO:0000312" key="11">
    <source>
        <dbReference type="EMBL" id="ACT52814.1"/>
    </source>
</evidence>
<evidence type="ECO:0000312" key="12">
    <source>
        <dbReference type="Proteomes" id="UP000000437"/>
    </source>
</evidence>
<evidence type="ECO:0000312" key="13">
    <source>
        <dbReference type="ZFIN" id="ZDB-GENE-040625-53"/>
    </source>
</evidence>
<evidence type="ECO:0007744" key="14">
    <source>
        <dbReference type="PDB" id="6NPH"/>
    </source>
</evidence>
<evidence type="ECO:0007744" key="15">
    <source>
        <dbReference type="PDB" id="6NPJ"/>
    </source>
</evidence>
<evidence type="ECO:0007744" key="16">
    <source>
        <dbReference type="PDB" id="6NPK"/>
    </source>
</evidence>
<evidence type="ECO:0007744" key="17">
    <source>
        <dbReference type="PDB" id="6NPL"/>
    </source>
</evidence>
<evidence type="ECO:0007829" key="18">
    <source>
        <dbReference type="PDB" id="6NPH"/>
    </source>
</evidence>
<evidence type="ECO:0007829" key="19">
    <source>
        <dbReference type="PDB" id="6NPL"/>
    </source>
</evidence>
<comment type="function">
    <text evidence="5 6">Cation-chloride cotransporter which mediates the electroneutral transport of chloride, potassium and/or sodium ions across the membrane (PubMed:31367042). Plays a vital role in the regulation of ionic balance and cell volume (PubMed:31367042). Important for maintenance of endolymph volume in the otic vesicle, probably by regulating ion homeostasis (PubMed:19633174). Also plays a role in normal development of the swim bladder (PubMed:19633174).</text>
</comment>
<comment type="catalytic activity">
    <reaction evidence="1">
        <text>K(+)(out) + 2 chloride(out) + Na(+)(out) = K(+)(in) + 2 chloride(in) + Na(+)(in)</text>
        <dbReference type="Rhea" id="RHEA:72395"/>
        <dbReference type="ChEBI" id="CHEBI:17996"/>
        <dbReference type="ChEBI" id="CHEBI:29101"/>
        <dbReference type="ChEBI" id="CHEBI:29103"/>
    </reaction>
    <physiologicalReaction direction="left-to-right" evidence="1">
        <dbReference type="Rhea" id="RHEA:72396"/>
    </physiologicalReaction>
</comment>
<comment type="activity regulation">
    <text evidence="2 6">Activated following phosphorylation by OXSR1/OSR1 and STK39/SPAK (By similarity). Inhibited by bumetanide (PubMed:31367042).</text>
</comment>
<comment type="subunit">
    <text evidence="6">Homodimer; adopts a domain-swap conformation at the scissor helices connecting the transmembrane domain and C-terminal domain.</text>
</comment>
<comment type="interaction">
    <interactant intactId="EBI-25645251">
        <id>A0A0G2KTI4</id>
    </interactant>
    <interactant intactId="EBI-25645251">
        <id>A0A0G2KTI4</id>
        <label>slc12a2</label>
    </interactant>
    <organismsDiffer>false</organismsDiffer>
    <experiments>2</experiments>
</comment>
<comment type="subcellular location">
    <subcellularLocation>
        <location evidence="5 9">Basolateral cell membrane</location>
        <topology evidence="9">Multi-pass membrane protein</topology>
    </subcellularLocation>
</comment>
<comment type="alternative products">
    <event type="alternative splicing"/>
    <isoform>
        <id>A0A0G2KTI4-1</id>
        <name>1</name>
        <sequence type="displayed"/>
    </isoform>
    <isoform>
        <id>A0A0G2KTI4-2</id>
        <name>2</name>
        <sequence type="described" ref="VSP_060837"/>
    </isoform>
</comment>
<comment type="developmental stage">
    <text evidence="5">Expressed in the otic vesicle at 6 days post-fertilization, with highest expression in the developing semicircular canals (at protein level). Detected in the notochord at the tailbud stage. Expressed in somites, notochord and intermediate mesoderm during early somitogenesis. Expressed in the otic vesicle from 24 hours post-fertilization onwards.</text>
</comment>
<comment type="PTM">
    <text evidence="2">Phosphorylated at Thr-125, Thr-129 and Thr-134 by OXSR1/OSR1 and STK39/SPAK downstream of WNK kinases (WNK1, WNK2, WNK3 or WNK4), promoting its activity.</text>
</comment>
<comment type="similarity">
    <text evidence="8">Belongs to the SLC12A transporter family.</text>
</comment>
<gene>
    <name evidence="13" type="primary">slc12a2</name>
    <name evidence="7" type="synonym">nkcc1</name>
</gene>
<reference evidence="11" key="1">
    <citation type="journal article" date="2009" name="Development">
        <title>Nkcc1 (Slc12a2) is required for the regulation of endolymph volume in the otic vesicle and swim bladder volume in the zebrafish larva.</title>
        <authorList>
            <person name="Abbas L."/>
            <person name="Whitfield T.T."/>
        </authorList>
    </citation>
    <scope>NUCLEOTIDE SEQUENCE [MRNA] (ISOFORM 2)</scope>
    <scope>FUNCTION</scope>
    <scope>SUBCELLULAR LOCATION</scope>
    <scope>DEVELOPMENTAL STAGE</scope>
    <scope>MUTAGENESIS OF 972-LYS--SER-1136</scope>
</reference>
<reference evidence="12" key="2">
    <citation type="journal article" date="2013" name="Nature">
        <title>The zebrafish reference genome sequence and its relationship to the human genome.</title>
        <authorList>
            <person name="Howe K."/>
            <person name="Clark M.D."/>
            <person name="Torroja C.F."/>
            <person name="Torrance J."/>
            <person name="Berthelot C."/>
            <person name="Muffato M."/>
            <person name="Collins J.E."/>
            <person name="Humphray S."/>
            <person name="McLaren K."/>
            <person name="Matthews L."/>
            <person name="McLaren S."/>
            <person name="Sealy I."/>
            <person name="Caccamo M."/>
            <person name="Churcher C."/>
            <person name="Scott C."/>
            <person name="Barrett J.C."/>
            <person name="Koch R."/>
            <person name="Rauch G.J."/>
            <person name="White S."/>
            <person name="Chow W."/>
            <person name="Kilian B."/>
            <person name="Quintais L.T."/>
            <person name="Guerra-Assuncao J.A."/>
            <person name="Zhou Y."/>
            <person name="Gu Y."/>
            <person name="Yen J."/>
            <person name="Vogel J.H."/>
            <person name="Eyre T."/>
            <person name="Redmond S."/>
            <person name="Banerjee R."/>
            <person name="Chi J."/>
            <person name="Fu B."/>
            <person name="Langley E."/>
            <person name="Maguire S.F."/>
            <person name="Laird G.K."/>
            <person name="Lloyd D."/>
            <person name="Kenyon E."/>
            <person name="Donaldson S."/>
            <person name="Sehra H."/>
            <person name="Almeida-King J."/>
            <person name="Loveland J."/>
            <person name="Trevanion S."/>
            <person name="Jones M."/>
            <person name="Quail M."/>
            <person name="Willey D."/>
            <person name="Hunt A."/>
            <person name="Burton J."/>
            <person name="Sims S."/>
            <person name="McLay K."/>
            <person name="Plumb B."/>
            <person name="Davis J."/>
            <person name="Clee C."/>
            <person name="Oliver K."/>
            <person name="Clark R."/>
            <person name="Riddle C."/>
            <person name="Elliot D."/>
            <person name="Threadgold G."/>
            <person name="Harden G."/>
            <person name="Ware D."/>
            <person name="Begum S."/>
            <person name="Mortimore B."/>
            <person name="Kerry G."/>
            <person name="Heath P."/>
            <person name="Phillimore B."/>
            <person name="Tracey A."/>
            <person name="Corby N."/>
            <person name="Dunn M."/>
            <person name="Johnson C."/>
            <person name="Wood J."/>
            <person name="Clark S."/>
            <person name="Pelan S."/>
            <person name="Griffiths G."/>
            <person name="Smith M."/>
            <person name="Glithero R."/>
            <person name="Howden P."/>
            <person name="Barker N."/>
            <person name="Lloyd C."/>
            <person name="Stevens C."/>
            <person name="Harley J."/>
            <person name="Holt K."/>
            <person name="Panagiotidis G."/>
            <person name="Lovell J."/>
            <person name="Beasley H."/>
            <person name="Henderson C."/>
            <person name="Gordon D."/>
            <person name="Auger K."/>
            <person name="Wright D."/>
            <person name="Collins J."/>
            <person name="Raisen C."/>
            <person name="Dyer L."/>
            <person name="Leung K."/>
            <person name="Robertson L."/>
            <person name="Ambridge K."/>
            <person name="Leongamornlert D."/>
            <person name="McGuire S."/>
            <person name="Gilderthorp R."/>
            <person name="Griffiths C."/>
            <person name="Manthravadi D."/>
            <person name="Nichol S."/>
            <person name="Barker G."/>
            <person name="Whitehead S."/>
            <person name="Kay M."/>
            <person name="Brown J."/>
            <person name="Murnane C."/>
            <person name="Gray E."/>
            <person name="Humphries M."/>
            <person name="Sycamore N."/>
            <person name="Barker D."/>
            <person name="Saunders D."/>
            <person name="Wallis J."/>
            <person name="Babbage A."/>
            <person name="Hammond S."/>
            <person name="Mashreghi-Mohammadi M."/>
            <person name="Barr L."/>
            <person name="Martin S."/>
            <person name="Wray P."/>
            <person name="Ellington A."/>
            <person name="Matthews N."/>
            <person name="Ellwood M."/>
            <person name="Woodmansey R."/>
            <person name="Clark G."/>
            <person name="Cooper J."/>
            <person name="Tromans A."/>
            <person name="Grafham D."/>
            <person name="Skuce C."/>
            <person name="Pandian R."/>
            <person name="Andrews R."/>
            <person name="Harrison E."/>
            <person name="Kimberley A."/>
            <person name="Garnett J."/>
            <person name="Fosker N."/>
            <person name="Hall R."/>
            <person name="Garner P."/>
            <person name="Kelly D."/>
            <person name="Bird C."/>
            <person name="Palmer S."/>
            <person name="Gehring I."/>
            <person name="Berger A."/>
            <person name="Dooley C.M."/>
            <person name="Ersan-Urun Z."/>
            <person name="Eser C."/>
            <person name="Geiger H."/>
            <person name="Geisler M."/>
            <person name="Karotki L."/>
            <person name="Kirn A."/>
            <person name="Konantz J."/>
            <person name="Konantz M."/>
            <person name="Oberlander M."/>
            <person name="Rudolph-Geiger S."/>
            <person name="Teucke M."/>
            <person name="Lanz C."/>
            <person name="Raddatz G."/>
            <person name="Osoegawa K."/>
            <person name="Zhu B."/>
            <person name="Rapp A."/>
            <person name="Widaa S."/>
            <person name="Langford C."/>
            <person name="Yang F."/>
            <person name="Schuster S.C."/>
            <person name="Carter N.P."/>
            <person name="Harrow J."/>
            <person name="Ning Z."/>
            <person name="Herrero J."/>
            <person name="Searle S.M."/>
            <person name="Enright A."/>
            <person name="Geisler R."/>
            <person name="Plasterk R.H."/>
            <person name="Lee C."/>
            <person name="Westerfield M."/>
            <person name="de Jong P.J."/>
            <person name="Zon L.I."/>
            <person name="Postlethwait J.H."/>
            <person name="Nusslein-Volhard C."/>
            <person name="Hubbard T.J."/>
            <person name="Roest Crollius H."/>
            <person name="Rogers J."/>
            <person name="Stemple D.L."/>
        </authorList>
    </citation>
    <scope>NUCLEOTIDE SEQUENCE [LARGE SCALE GENOMIC DNA]</scope>
    <source>
        <strain evidence="12">Tuebingen</strain>
    </source>
</reference>
<reference evidence="10" key="3">
    <citation type="submission" date="2004-06" db="EMBL/GenBank/DDBJ databases">
        <authorList>
            <consortium name="NIH - Zebrafish Gene Collection (ZGC) project"/>
        </authorList>
    </citation>
    <scope>NUCLEOTIDE SEQUENCE [LARGE SCALE MRNA] (ISOFORM 1)</scope>
    <source>
        <tissue evidence="10">Embryo</tissue>
    </source>
</reference>
<reference evidence="14 15 16 17" key="4">
    <citation type="journal article" date="2019" name="Nature">
        <title>Structure and mechanism of the cation-chloride cotransporter NKCC1.</title>
        <authorList>
            <person name="Chew T.A."/>
            <person name="Orlando B.J."/>
            <person name="Zhang J."/>
            <person name="Latorraca N.R."/>
            <person name="Wang A."/>
            <person name="Hollingsworth S.A."/>
            <person name="Chen D.H."/>
            <person name="Dror R.O."/>
            <person name="Liao M."/>
            <person name="Feng L."/>
        </authorList>
    </citation>
    <scope>STRUCTURE BY ELECTRON MICROSCOPY (2.90 ANGSTROMS) OF 206-1120</scope>
    <scope>FUNCTION</scope>
    <scope>ACTIVITY REGULATION</scope>
    <scope>SUBUNIT</scope>
    <scope>SUBCELLULAR LOCATION</scope>
    <scope>TOPOLOGY</scope>
    <scope>DISULFIDE BONDS</scope>
    <scope>MUTAGENESIS OF ASN-220; TYR-305; TYR-454; SER-538; SER-539; TYR-611; ARG-630; ASN-682 AND SER-686</scope>
</reference>
<feature type="chain" id="PRO_0000451717" description="Solute carrier family 12 member 2">
    <location>
        <begin position="1"/>
        <end position="1136"/>
    </location>
</feature>
<feature type="topological domain" description="Cytoplasmic" evidence="6 17">
    <location>
        <begin position="1"/>
        <end position="208"/>
    </location>
</feature>
<feature type="transmembrane region" description="Discontinuously helical; Name=1" evidence="6 17">
    <location>
        <begin position="209"/>
        <end position="234"/>
    </location>
</feature>
<feature type="topological domain" description="Extracellular" evidence="6 17">
    <location>
        <begin position="235"/>
        <end position="238"/>
    </location>
</feature>
<feature type="transmembrane region" description="Helical; Name=2" evidence="6 17">
    <location>
        <begin position="239"/>
        <end position="261"/>
    </location>
</feature>
<feature type="topological domain" description="Cytoplasmic" evidence="6 17">
    <location>
        <begin position="262"/>
        <end position="285"/>
    </location>
</feature>
<feature type="transmembrane region" description="Helical; Name=3" evidence="6 17">
    <location>
        <begin position="286"/>
        <end position="314"/>
    </location>
</feature>
<feature type="topological domain" description="Extracellular" evidence="6 17">
    <location>
        <begin position="315"/>
        <end position="327"/>
    </location>
</feature>
<feature type="transmembrane region" description="Helical; Name=4" evidence="6 17">
    <location>
        <begin position="328"/>
        <end position="351"/>
    </location>
</feature>
<feature type="transmembrane region" description="Helical; Name=5" evidence="6 17">
    <location>
        <begin position="352"/>
        <end position="376"/>
    </location>
</feature>
<feature type="topological domain" description="Extracellular" evidence="6 17">
    <location>
        <begin position="377"/>
        <end position="407"/>
    </location>
</feature>
<feature type="transmembrane region" description="Discontinuously helical; Name=6" evidence="6 17">
    <location>
        <begin position="408"/>
        <end position="427"/>
    </location>
</feature>
<feature type="topological domain" description="Cytoplasmic" evidence="6 17">
    <location>
        <begin position="428"/>
        <end position="438"/>
    </location>
</feature>
<feature type="transmembrane region" description="Helical; Name=7" evidence="6 17">
    <location>
        <begin position="439"/>
        <end position="462"/>
    </location>
</feature>
<feature type="topological domain" description="Extracellular" evidence="6 17">
    <location>
        <begin position="463"/>
        <end position="523"/>
    </location>
</feature>
<feature type="transmembrane region" description="Helical; Name=8" evidence="6 17">
    <location>
        <begin position="524"/>
        <end position="551"/>
    </location>
</feature>
<feature type="topological domain" description="Cytoplasmic" evidence="6 17">
    <location>
        <begin position="552"/>
        <end position="576"/>
    </location>
</feature>
<feature type="transmembrane region" description="Helical; Name=9" evidence="6 17">
    <location>
        <begin position="577"/>
        <end position="595"/>
    </location>
</feature>
<feature type="transmembrane region" description="Helical; Name=10" evidence="6 17">
    <location>
        <begin position="596"/>
        <end position="619"/>
    </location>
</feature>
<feature type="topological domain" description="Cytoplasmic" evidence="6 17">
    <location>
        <begin position="620"/>
        <end position="636"/>
    </location>
</feature>
<feature type="transmembrane region" description="Helical; Name=11" evidence="6 17">
    <location>
        <begin position="637"/>
        <end position="656"/>
    </location>
</feature>
<feature type="transmembrane region" description="Helical; Name=12" evidence="6 17">
    <location>
        <begin position="657"/>
        <end position="672"/>
    </location>
</feature>
<feature type="topological domain" description="Cytoplasmic" evidence="6 17">
    <location>
        <begin position="673"/>
        <end position="1136"/>
    </location>
</feature>
<feature type="region of interest" description="Disordered" evidence="4">
    <location>
        <begin position="1"/>
        <end position="73"/>
    </location>
</feature>
<feature type="region of interest" description="Disordered" evidence="4">
    <location>
        <begin position="91"/>
        <end position="121"/>
    </location>
</feature>
<feature type="region of interest" description="Scissor helix" evidence="6 17">
    <location>
        <begin position="689"/>
        <end position="702"/>
    </location>
</feature>
<feature type="region of interest" description="Disordered" evidence="4">
    <location>
        <begin position="875"/>
        <end position="921"/>
    </location>
</feature>
<feature type="binding site" evidence="1">
    <location>
        <position position="219"/>
    </location>
    <ligand>
        <name>Na(+)</name>
        <dbReference type="ChEBI" id="CHEBI:29101"/>
    </ligand>
</feature>
<feature type="binding site" evidence="14 17">
    <location>
        <position position="220"/>
    </location>
    <ligand>
        <name>K(+)</name>
        <dbReference type="ChEBI" id="CHEBI:29103"/>
    </ligand>
</feature>
<feature type="binding site" evidence="14 17">
    <location>
        <position position="221"/>
    </location>
    <ligand>
        <name>K(+)</name>
        <dbReference type="ChEBI" id="CHEBI:29103"/>
    </ligand>
</feature>
<feature type="binding site" evidence="1">
    <location>
        <position position="222"/>
    </location>
    <ligand>
        <name>Na(+)</name>
        <dbReference type="ChEBI" id="CHEBI:29101"/>
    </ligand>
</feature>
<feature type="binding site" evidence="17">
    <location>
        <position position="223"/>
    </location>
    <ligand>
        <name>chloride</name>
        <dbReference type="ChEBI" id="CHEBI:17996"/>
        <label>1</label>
    </ligand>
</feature>
<feature type="binding site" evidence="14 17">
    <location>
        <position position="224"/>
    </location>
    <ligand>
        <name>chloride</name>
        <dbReference type="ChEBI" id="CHEBI:17996"/>
        <label>1</label>
    </ligand>
</feature>
<feature type="binding site" evidence="17">
    <location>
        <position position="225"/>
    </location>
    <ligand>
        <name>chloride</name>
        <dbReference type="ChEBI" id="CHEBI:17996"/>
        <label>1</label>
    </ligand>
</feature>
<feature type="binding site" evidence="1">
    <location>
        <position position="294"/>
    </location>
    <ligand>
        <name>chloride</name>
        <dbReference type="ChEBI" id="CHEBI:17996"/>
        <label>2</label>
    </ligand>
</feature>
<feature type="binding site" evidence="14 17">
    <location>
        <position position="305"/>
    </location>
    <ligand>
        <name>K(+)</name>
        <dbReference type="ChEBI" id="CHEBI:29103"/>
    </ligand>
</feature>
<feature type="binding site" evidence="1">
    <location>
        <position position="417"/>
    </location>
    <ligand>
        <name>chloride</name>
        <dbReference type="ChEBI" id="CHEBI:17996"/>
        <label>1</label>
    </ligand>
</feature>
<feature type="binding site" evidence="14 17">
    <location>
        <position position="417"/>
    </location>
    <ligand>
        <name>K(+)</name>
        <dbReference type="ChEBI" id="CHEBI:29103"/>
    </ligand>
</feature>
<feature type="binding site" evidence="1">
    <location>
        <position position="418"/>
    </location>
    <ligand>
        <name>chloride</name>
        <dbReference type="ChEBI" id="CHEBI:17996"/>
        <label>1</label>
    </ligand>
</feature>
<feature type="binding site" evidence="1">
    <location>
        <position position="418"/>
    </location>
    <ligand>
        <name>K(+)</name>
        <dbReference type="ChEBI" id="CHEBI:29103"/>
    </ligand>
</feature>
<feature type="binding site" evidence="14 17">
    <location>
        <position position="420"/>
    </location>
    <ligand>
        <name>K(+)</name>
        <dbReference type="ChEBI" id="CHEBI:29103"/>
    </ligand>
</feature>
<feature type="binding site" evidence="1">
    <location>
        <position position="421"/>
    </location>
    <ligand>
        <name>chloride</name>
        <dbReference type="ChEBI" id="CHEBI:17996"/>
        <label>1</label>
    </ligand>
</feature>
<feature type="binding site" evidence="1">
    <location>
        <position position="422"/>
    </location>
    <ligand>
        <name>chloride</name>
        <dbReference type="ChEBI" id="CHEBI:17996"/>
        <label>1</label>
    </ligand>
</feature>
<feature type="binding site" evidence="1">
    <location>
        <position position="535"/>
    </location>
    <ligand>
        <name>Na(+)</name>
        <dbReference type="ChEBI" id="CHEBI:29101"/>
    </ligand>
</feature>
<feature type="binding site" evidence="1">
    <location>
        <position position="538"/>
    </location>
    <ligand>
        <name>Na(+)</name>
        <dbReference type="ChEBI" id="CHEBI:29101"/>
    </ligand>
</feature>
<feature type="binding site" evidence="1">
    <location>
        <position position="539"/>
    </location>
    <ligand>
        <name>Na(+)</name>
        <dbReference type="ChEBI" id="CHEBI:29101"/>
    </ligand>
</feature>
<feature type="binding site" evidence="1">
    <location>
        <position position="607"/>
    </location>
    <ligand>
        <name>chloride</name>
        <dbReference type="ChEBI" id="CHEBI:17996"/>
        <label>2</label>
    </ligand>
</feature>
<feature type="binding site" evidence="1">
    <location>
        <position position="611"/>
    </location>
    <ligand>
        <name>chloride</name>
        <dbReference type="ChEBI" id="CHEBI:17996"/>
        <label>2</label>
    </ligand>
</feature>
<feature type="modified residue" description="Phosphothreonine" evidence="2">
    <location>
        <position position="125"/>
    </location>
</feature>
<feature type="modified residue" description="Phosphothreonine" evidence="2">
    <location>
        <position position="129"/>
    </location>
</feature>
<feature type="modified residue" description="Phosphothreonine" evidence="2">
    <location>
        <position position="134"/>
    </location>
</feature>
<feature type="modified residue" description="Phosphothreonine" evidence="2">
    <location>
        <position position="139"/>
    </location>
</feature>
<feature type="modified residue" description="Phosphothreonine" evidence="2">
    <location>
        <position position="152"/>
    </location>
</feature>
<feature type="modified residue" description="Phosphothreonine" evidence="2">
    <location>
        <position position="1059"/>
    </location>
</feature>
<feature type="glycosylation site" description="N-linked (GlcNAc...) asparagine" evidence="3">
    <location>
        <position position="475"/>
    </location>
</feature>
<feature type="glycosylation site" description="N-linked (GlcNAc...) asparagine" evidence="3">
    <location>
        <position position="481"/>
    </location>
</feature>
<feature type="disulfide bond" evidence="6 14 16 17">
    <location>
        <begin position="496"/>
        <end position="507"/>
    </location>
</feature>
<feature type="splice variant" id="VSP_060837" description="In isoform 2." evidence="8">
    <location>
        <begin position="900"/>
        <end position="915"/>
    </location>
</feature>
<feature type="mutagenesis site" description="Moderately impairs transporter activity." evidence="6">
    <original>N</original>
    <variation>A</variation>
    <location>
        <position position="220"/>
    </location>
</feature>
<feature type="mutagenesis site" description="Severely impairs transporter activity." evidence="6">
    <original>Y</original>
    <variation>F</variation>
    <variation>H</variation>
    <variation>W</variation>
    <location>
        <position position="305"/>
    </location>
</feature>
<feature type="mutagenesis site" description="Severely impairs transporter activity." evidence="6">
    <original>Y</original>
    <variation>A</variation>
    <location>
        <position position="454"/>
    </location>
</feature>
<feature type="mutagenesis site" description="Severely impairs transporter activity." evidence="6">
    <original>S</original>
    <variation>A</variation>
    <location>
        <position position="538"/>
    </location>
</feature>
<feature type="mutagenesis site" description="Severely impairs transporter activity." evidence="6">
    <original>S</original>
    <variation>A</variation>
    <location>
        <position position="539"/>
    </location>
</feature>
<feature type="mutagenesis site" description="Severely impairs transporter activity." evidence="6">
    <original>Y</original>
    <variation>A</variation>
    <location>
        <position position="611"/>
    </location>
</feature>
<feature type="mutagenesis site" description="Severely impairs transporter activity." evidence="6">
    <original>R</original>
    <variation>A</variation>
    <location>
        <position position="630"/>
    </location>
</feature>
<feature type="mutagenesis site" description="Severely impairs transporter activity." evidence="6">
    <original>N</original>
    <variation>A</variation>
    <location>
        <position position="682"/>
    </location>
</feature>
<feature type="mutagenesis site" description="Severely impairs transporter activity." evidence="6">
    <original>S</original>
    <variation>A</variation>
    <location>
        <position position="686"/>
    </location>
</feature>
<feature type="mutagenesis site" description="In tg414b; Lethality between 6 and 14 days post-fertilization. Early ear development appears normal. The developing otic vesicle begins to collapse at 72 hours post-fertilization, probably due loss of endolymphatic fluid, and is significantly reduced in size by 5 days post-fertilization. Hair cells appear normal and there is no evidence of reduced cell numbers or apoptosis." evidence="5">
    <location>
        <begin position="972"/>
        <end position="1136"/>
    </location>
</feature>
<feature type="sequence conflict" description="In Ref. 3; AAH71283." evidence="8" ref="3">
    <original>E</original>
    <variation>K</variation>
    <location>
        <position position="76"/>
    </location>
</feature>
<feature type="sequence conflict" description="In Ref. 1; ACT52814." evidence="8" ref="1">
    <original>G</original>
    <variation>D</variation>
    <location>
        <position position="321"/>
    </location>
</feature>
<feature type="sequence conflict" description="In Ref. 3; AAH71283 and 1; ACT52814." evidence="8" ref="3 1">
    <original>T</original>
    <variation>I</variation>
    <location>
        <position position="819"/>
    </location>
</feature>
<feature type="helix" evidence="18">
    <location>
        <begin position="209"/>
        <end position="212"/>
    </location>
</feature>
<feature type="helix" evidence="18">
    <location>
        <begin position="214"/>
        <end position="221"/>
    </location>
</feature>
<feature type="turn" evidence="18">
    <location>
        <begin position="225"/>
        <end position="227"/>
    </location>
</feature>
<feature type="strand" evidence="18">
    <location>
        <begin position="228"/>
        <end position="230"/>
    </location>
</feature>
<feature type="helix" evidence="18">
    <location>
        <begin position="231"/>
        <end position="236"/>
    </location>
</feature>
<feature type="helix" evidence="18">
    <location>
        <begin position="239"/>
        <end position="264"/>
    </location>
</feature>
<feature type="helix" evidence="18">
    <location>
        <begin position="274"/>
        <end position="281"/>
    </location>
</feature>
<feature type="helix" evidence="18">
    <location>
        <begin position="284"/>
        <end position="319"/>
    </location>
</feature>
<feature type="helix" evidence="18">
    <location>
        <begin position="327"/>
        <end position="340"/>
    </location>
</feature>
<feature type="helix" evidence="18">
    <location>
        <begin position="342"/>
        <end position="348"/>
    </location>
</feature>
<feature type="helix" evidence="18">
    <location>
        <begin position="350"/>
        <end position="374"/>
    </location>
</feature>
<feature type="turn" evidence="18">
    <location>
        <begin position="380"/>
        <end position="384"/>
    </location>
</feature>
<feature type="helix" evidence="18">
    <location>
        <begin position="392"/>
        <end position="397"/>
    </location>
</feature>
<feature type="strand" evidence="18">
    <location>
        <begin position="398"/>
        <end position="400"/>
    </location>
</feature>
<feature type="turn" evidence="18">
    <location>
        <begin position="408"/>
        <end position="410"/>
    </location>
</feature>
<feature type="helix" evidence="18">
    <location>
        <begin position="412"/>
        <end position="415"/>
    </location>
</feature>
<feature type="helix" evidence="18">
    <location>
        <begin position="416"/>
        <end position="418"/>
    </location>
</feature>
<feature type="helix" evidence="18">
    <location>
        <begin position="422"/>
        <end position="424"/>
    </location>
</feature>
<feature type="turn" evidence="18">
    <location>
        <begin position="425"/>
        <end position="427"/>
    </location>
</feature>
<feature type="strand" evidence="19">
    <location>
        <begin position="429"/>
        <end position="433"/>
    </location>
</feature>
<feature type="helix" evidence="18">
    <location>
        <begin position="435"/>
        <end position="462"/>
    </location>
</feature>
<feature type="strand" evidence="19">
    <location>
        <begin position="495"/>
        <end position="497"/>
    </location>
</feature>
<feature type="strand" evidence="18">
    <location>
        <begin position="499"/>
        <end position="503"/>
    </location>
</feature>
<feature type="turn" evidence="18">
    <location>
        <begin position="511"/>
        <end position="513"/>
    </location>
</feature>
<feature type="helix" evidence="18">
    <location>
        <begin position="518"/>
        <end position="521"/>
    </location>
</feature>
<feature type="strand" evidence="18">
    <location>
        <begin position="522"/>
        <end position="524"/>
    </location>
</feature>
<feature type="turn" evidence="18">
    <location>
        <begin position="525"/>
        <end position="527"/>
    </location>
</feature>
<feature type="helix" evidence="18">
    <location>
        <begin position="528"/>
        <end position="531"/>
    </location>
</feature>
<feature type="helix" evidence="18">
    <location>
        <begin position="532"/>
        <end position="544"/>
    </location>
</feature>
<feature type="helix" evidence="18">
    <location>
        <begin position="547"/>
        <end position="554"/>
    </location>
</feature>
<feature type="turn" evidence="18">
    <location>
        <begin position="555"/>
        <end position="558"/>
    </location>
</feature>
<feature type="helix" evidence="18">
    <location>
        <begin position="562"/>
        <end position="565"/>
    </location>
</feature>
<feature type="turn" evidence="18">
    <location>
        <begin position="571"/>
        <end position="574"/>
    </location>
</feature>
<feature type="helix" evidence="18">
    <location>
        <begin position="577"/>
        <end position="591"/>
    </location>
</feature>
<feature type="helix" evidence="18">
    <location>
        <begin position="596"/>
        <end position="624"/>
    </location>
</feature>
<feature type="helix" evidence="18">
    <location>
        <begin position="638"/>
        <end position="655"/>
    </location>
</feature>
<feature type="helix" evidence="18">
    <location>
        <begin position="657"/>
        <end position="675"/>
    </location>
</feature>
<feature type="helix" evidence="19">
    <location>
        <begin position="689"/>
        <end position="702"/>
    </location>
</feature>
<feature type="strand" evidence="19">
    <location>
        <begin position="716"/>
        <end position="719"/>
    </location>
</feature>
<feature type="helix" evidence="19">
    <location>
        <begin position="727"/>
        <end position="735"/>
    </location>
</feature>
<feature type="strand" evidence="19">
    <location>
        <begin position="736"/>
        <end position="741"/>
    </location>
</feature>
<feature type="strand" evidence="19">
    <location>
        <begin position="743"/>
        <end position="749"/>
    </location>
</feature>
<feature type="helix" evidence="19">
    <location>
        <begin position="760"/>
        <end position="773"/>
    </location>
</feature>
<feature type="strand" evidence="19">
    <location>
        <begin position="778"/>
        <end position="784"/>
    </location>
</feature>
<feature type="helix" evidence="19">
    <location>
        <begin position="788"/>
        <end position="796"/>
    </location>
</feature>
<feature type="strand" evidence="19">
    <location>
        <begin position="808"/>
        <end position="812"/>
    </location>
</feature>
<feature type="strand" evidence="19">
    <location>
        <begin position="817"/>
        <end position="820"/>
    </location>
</feature>
<feature type="turn" evidence="19">
    <location>
        <begin position="822"/>
        <end position="824"/>
    </location>
</feature>
<feature type="helix" evidence="19">
    <location>
        <begin position="825"/>
        <end position="835"/>
    </location>
</feature>
<feature type="turn" evidence="19">
    <location>
        <begin position="836"/>
        <end position="839"/>
    </location>
</feature>
<feature type="strand" evidence="19">
    <location>
        <begin position="841"/>
        <end position="845"/>
    </location>
</feature>
<feature type="helix" evidence="19">
    <location>
        <begin position="926"/>
        <end position="934"/>
    </location>
</feature>
<feature type="strand" evidence="19">
    <location>
        <begin position="938"/>
        <end position="942"/>
    </location>
</feature>
<feature type="strand" evidence="19">
    <location>
        <begin position="949"/>
        <end position="952"/>
    </location>
</feature>
<feature type="helix" evidence="19">
    <location>
        <begin position="959"/>
        <end position="968"/>
    </location>
</feature>
<feature type="strand" evidence="19">
    <location>
        <begin position="969"/>
        <end position="972"/>
    </location>
</feature>
<feature type="strand" evidence="19">
    <location>
        <begin position="981"/>
        <end position="983"/>
    </location>
</feature>
<feature type="helix" evidence="19">
    <location>
        <begin position="992"/>
        <end position="1002"/>
    </location>
</feature>
<feature type="strand" evidence="19">
    <location>
        <begin position="1011"/>
        <end position="1013"/>
    </location>
</feature>
<feature type="helix" evidence="19">
    <location>
        <begin position="1022"/>
        <end position="1029"/>
    </location>
</feature>
<feature type="helix" evidence="19">
    <location>
        <begin position="1042"/>
        <end position="1048"/>
    </location>
</feature>
<feature type="turn" evidence="19">
    <location>
        <begin position="1049"/>
        <end position="1051"/>
    </location>
</feature>
<feature type="strand" evidence="19">
    <location>
        <begin position="1053"/>
        <end position="1055"/>
    </location>
</feature>
<feature type="helix" evidence="19">
    <location>
        <begin position="1060"/>
        <end position="1064"/>
    </location>
</feature>
<feature type="helix" evidence="19">
    <location>
        <begin position="1067"/>
        <end position="1083"/>
    </location>
</feature>
<feature type="strand" evidence="19">
    <location>
        <begin position="1090"/>
        <end position="1093"/>
    </location>
</feature>
<feature type="helix" evidence="19">
    <location>
        <begin position="1104"/>
        <end position="1114"/>
    </location>
</feature>
<feature type="strand" evidence="19">
    <location>
        <begin position="1119"/>
        <end position="1125"/>
    </location>
</feature>
<organism evidence="12">
    <name type="scientific">Danio rerio</name>
    <name type="common">Zebrafish</name>
    <name type="synonym">Brachydanio rerio</name>
    <dbReference type="NCBI Taxonomy" id="7955"/>
    <lineage>
        <taxon>Eukaryota</taxon>
        <taxon>Metazoa</taxon>
        <taxon>Chordata</taxon>
        <taxon>Craniata</taxon>
        <taxon>Vertebrata</taxon>
        <taxon>Euteleostomi</taxon>
        <taxon>Actinopterygii</taxon>
        <taxon>Neopterygii</taxon>
        <taxon>Teleostei</taxon>
        <taxon>Ostariophysi</taxon>
        <taxon>Cypriniformes</taxon>
        <taxon>Danionidae</taxon>
        <taxon>Danioninae</taxon>
        <taxon>Danio</taxon>
    </lineage>
</organism>